<organism>
    <name type="scientific">Encephalitozoon cuniculi (strain GB-M1)</name>
    <name type="common">Microsporidian parasite</name>
    <dbReference type="NCBI Taxonomy" id="284813"/>
    <lineage>
        <taxon>Eukaryota</taxon>
        <taxon>Fungi</taxon>
        <taxon>Fungi incertae sedis</taxon>
        <taxon>Microsporidia</taxon>
        <taxon>Unikaryonidae</taxon>
        <taxon>Encephalitozoon</taxon>
    </lineage>
</organism>
<protein>
    <recommendedName>
        <fullName evidence="4">Large ribosomal subunit protein P2</fullName>
    </recommendedName>
    <alternativeName>
        <fullName>60S acidic ribosomal protein P2</fullName>
    </alternativeName>
</protein>
<keyword id="KW-0963">Cytoplasm</keyword>
<keyword id="KW-1185">Reference proteome</keyword>
<keyword id="KW-0687">Ribonucleoprotein</keyword>
<keyword id="KW-0689">Ribosomal protein</keyword>
<evidence type="ECO:0000250" key="1"/>
<evidence type="ECO:0000256" key="2">
    <source>
        <dbReference type="SAM" id="MobiDB-lite"/>
    </source>
</evidence>
<evidence type="ECO:0000269" key="3">
    <source>
    </source>
</evidence>
<evidence type="ECO:0000305" key="4"/>
<accession>Q8SRM2</accession>
<proteinExistence type="evidence at protein level"/>
<reference key="1">
    <citation type="journal article" date="2001" name="Nature">
        <title>Genome sequence and gene compaction of the eukaryote parasite Encephalitozoon cuniculi.</title>
        <authorList>
            <person name="Katinka M.D."/>
            <person name="Duprat S."/>
            <person name="Cornillot E."/>
            <person name="Metenier G."/>
            <person name="Thomarat F."/>
            <person name="Prensier G."/>
            <person name="Barbe V."/>
            <person name="Peyretaillade E."/>
            <person name="Brottier P."/>
            <person name="Wincker P."/>
            <person name="Delbac F."/>
            <person name="El Alaoui H."/>
            <person name="Peyret P."/>
            <person name="Saurin W."/>
            <person name="Gouy M."/>
            <person name="Weissenbach J."/>
            <person name="Vivares C.P."/>
        </authorList>
    </citation>
    <scope>NUCLEOTIDE SEQUENCE [LARGE SCALE GENOMIC DNA]</scope>
    <source>
        <strain>GB-M1</strain>
    </source>
</reference>
<reference key="2">
    <citation type="journal article" date="2006" name="Proteomics">
        <title>Proteomic analysis of the eukaryotic parasite Encephalitozoon cuniculi (microsporidia): a reference map for proteins expressed in late sporogonial stages.</title>
        <authorList>
            <person name="Brosson D."/>
            <person name="Kuhn L."/>
            <person name="Delbac F."/>
            <person name="Garin J."/>
            <person name="Vivares C.P."/>
            <person name="Texier C."/>
        </authorList>
    </citation>
    <scope>IDENTIFICATION BY MASS SPECTROMETRY [LARGE SCALE ANALYSIS]</scope>
    <scope>DEVELOPMENTAL STAGE</scope>
</reference>
<comment type="function">
    <text evidence="1">Plays an important role in the elongation step of protein synthesis.</text>
</comment>
<comment type="subunit">
    <text evidence="1">Component of the large ribosomal subunit.</text>
</comment>
<comment type="subcellular location">
    <subcellularLocation>
        <location evidence="1">Cytoplasm</location>
    </subcellularLocation>
</comment>
<comment type="developmental stage">
    <text evidence="3">Expressed in late sporogonial stages.</text>
</comment>
<comment type="similarity">
    <text evidence="4">Belongs to the eukaryotic ribosomal protein P1/P2 family.</text>
</comment>
<feature type="chain" id="PRO_0000383124" description="Large ribosomal subunit protein P2">
    <location>
        <begin position="1"/>
        <end position="103"/>
    </location>
</feature>
<feature type="region of interest" description="Disordered" evidence="2">
    <location>
        <begin position="64"/>
        <end position="103"/>
    </location>
</feature>
<feature type="compositionally biased region" description="Acidic residues" evidence="2">
    <location>
        <begin position="90"/>
        <end position="103"/>
    </location>
</feature>
<name>RLA2_ENCCU</name>
<gene>
    <name type="primary">RPP2A</name>
    <name type="ordered locus">ECU07_0110</name>
</gene>
<sequence length="103" mass="11488">MEYVAAYVMFDKVGKELNERSMTELFNEIGAEIEPETMRLFLSKVSGKSMDEVMSKGKELMASLAISSSQKSEPAQPADTAESTQATENKEEEDEDFDIFAAF</sequence>
<dbReference type="EMBL" id="AL590447">
    <property type="protein sequence ID" value="CAD25543.1"/>
    <property type="molecule type" value="Genomic_DNA"/>
</dbReference>
<dbReference type="RefSeq" id="NP_585939.1">
    <property type="nucleotide sequence ID" value="NM_001041561.1"/>
</dbReference>
<dbReference type="SMR" id="Q8SRM2"/>
<dbReference type="FunCoup" id="Q8SRM2">
    <property type="interactions" value="167"/>
</dbReference>
<dbReference type="STRING" id="284813.Q8SRM2"/>
<dbReference type="GeneID" id="859367"/>
<dbReference type="KEGG" id="ecu:ECU07_0110"/>
<dbReference type="VEuPathDB" id="MicrosporidiaDB:ECU07_0110"/>
<dbReference type="HOGENOM" id="CLU_114656_0_2_1"/>
<dbReference type="InParanoid" id="Q8SRM2"/>
<dbReference type="OMA" id="YVAAYVM"/>
<dbReference type="OrthoDB" id="1227494at2759"/>
<dbReference type="Proteomes" id="UP000000819">
    <property type="component" value="Chromosome VII"/>
</dbReference>
<dbReference type="GO" id="GO:0022625">
    <property type="term" value="C:cytosolic large ribosomal subunit"/>
    <property type="evidence" value="ECO:0007669"/>
    <property type="project" value="InterPro"/>
</dbReference>
<dbReference type="GO" id="GO:0003735">
    <property type="term" value="F:structural constituent of ribosome"/>
    <property type="evidence" value="ECO:0007669"/>
    <property type="project" value="InterPro"/>
</dbReference>
<dbReference type="GO" id="GO:0002182">
    <property type="term" value="P:cytoplasmic translational elongation"/>
    <property type="evidence" value="ECO:0007669"/>
    <property type="project" value="InterPro"/>
</dbReference>
<dbReference type="CDD" id="cd04411">
    <property type="entry name" value="Ribosomal_P1_P2_L12p"/>
    <property type="match status" value="1"/>
</dbReference>
<dbReference type="Gene3D" id="1.10.10.1410">
    <property type="match status" value="1"/>
</dbReference>
<dbReference type="HAMAP" id="MF_01478">
    <property type="entry name" value="Ribosomal_L12_arch"/>
    <property type="match status" value="1"/>
</dbReference>
<dbReference type="InterPro" id="IPR038716">
    <property type="entry name" value="P1/P2_N_sf"/>
</dbReference>
<dbReference type="InterPro" id="IPR027534">
    <property type="entry name" value="Ribosomal_P1/P2"/>
</dbReference>
<dbReference type="InterPro" id="IPR044076">
    <property type="entry name" value="Ribosomal_P2"/>
</dbReference>
<dbReference type="PANTHER" id="PTHR21141">
    <property type="entry name" value="60S ACIDIC RIBOSOMAL PROTEIN FAMILY MEMBER"/>
    <property type="match status" value="1"/>
</dbReference>
<dbReference type="PANTHER" id="PTHR21141:SF5">
    <property type="entry name" value="LARGE RIBOSOMAL SUBUNIT PROTEIN P2"/>
    <property type="match status" value="1"/>
</dbReference>
<dbReference type="Pfam" id="PF00428">
    <property type="entry name" value="Ribosomal_60s"/>
    <property type="match status" value="1"/>
</dbReference>